<reference key="1">
    <citation type="journal article" date="1993" name="J. Gen. Virol.">
        <title>Duplicated genes within the variable right end of the genome of a pathogenic isolate of African swine fever virus.</title>
        <authorList>
            <person name="Vydelingum S."/>
            <person name="Baylis S.A."/>
            <person name="Bristow C."/>
            <person name="Smith G.L."/>
            <person name="Dixon L.K."/>
        </authorList>
    </citation>
    <scope>NUCLEOTIDE SEQUENCE [GENOMIC DNA]</scope>
</reference>
<reference key="2">
    <citation type="journal article" date="1994" name="J. Gen. Virol.">
        <title>Nucleotide sequence of a 55 kbp region from the right end of the genome of a pathogenic African swine fever virus isolate (Malawi LIL20/1).</title>
        <authorList>
            <person name="Dixon L.K."/>
            <person name="Twigg S.R.F."/>
            <person name="Baylis S.A."/>
            <person name="Vydelingum S."/>
            <person name="Bristow C."/>
            <person name="Hammond J.M."/>
            <person name="Smith G.L."/>
        </authorList>
    </citation>
    <scope>NUCLEOTIDE SEQUENCE [GENOMIC DNA]</scope>
</reference>
<reference key="3">
    <citation type="submission" date="2003-03" db="EMBL/GenBank/DDBJ databases">
        <title>African swine fever virus genomes.</title>
        <authorList>
            <person name="Kutish G.F."/>
            <person name="Rock D.L."/>
        </authorList>
    </citation>
    <scope>NUCLEOTIDE SEQUENCE [LARGE SCALE GENOMIC DNA]</scope>
</reference>
<reference key="4">
    <citation type="journal article" date="1998" name="J. Gen. Virol.">
        <title>Characterization of African swine fever virion proteins j5R and j13L: immuno-localization in virus particles and assembly sites.</title>
        <authorList>
            <person name="Brookes S.M."/>
            <person name="Sun H."/>
            <person name="Dixon L.K."/>
            <person name="Parkhouse R.M.E."/>
        </authorList>
    </citation>
    <scope>CHARACTERIZATION</scope>
    <scope>SUBCELLULAR LOCATION</scope>
</reference>
<gene>
    <name type="ordered locus">Mal-125</name>
    <name type="ORF">j5R</name>
</gene>
<sequence length="111" mass="12952">MVNLFPVFTLIVIITILITTRELSTTMLIVSLVTDYIIINTQYTEQQHEMNTFSTQQLPQKNSFNESYNKDKKSNTHIPYQWLAPELKEAENKYWWGNYDPYSEPVLAGAS</sequence>
<accession>Q65233</accession>
<feature type="chain" id="PRO_0000373472" description="Inner membrane protein H108R">
    <location>
        <begin position="1"/>
        <end position="111"/>
    </location>
</feature>
<feature type="transmembrane region" description="Helical" evidence="2">
    <location>
        <begin position="10"/>
        <end position="32"/>
    </location>
</feature>
<feature type="glycosylation site" description="N-linked (GlcNAc...) asparagine; by host" evidence="2">
    <location>
        <position position="65"/>
    </location>
</feature>
<organism>
    <name type="scientific">African swine fever virus (isolate Tick/Malawi/Lil 20-1/1983)</name>
    <name type="common">ASFV</name>
    <dbReference type="NCBI Taxonomy" id="10500"/>
    <lineage>
        <taxon>Viruses</taxon>
        <taxon>Varidnaviria</taxon>
        <taxon>Bamfordvirae</taxon>
        <taxon>Nucleocytoviricota</taxon>
        <taxon>Pokkesviricetes</taxon>
        <taxon>Asfuvirales</taxon>
        <taxon>Asfarviridae</taxon>
        <taxon>Asfivirus</taxon>
        <taxon>African swine fever virus</taxon>
    </lineage>
</organism>
<dbReference type="EMBL" id="X71982">
    <property type="protein sequence ID" value="CAA50825.1"/>
    <property type="molecule type" value="Genomic_DNA"/>
</dbReference>
<dbReference type="EMBL" id="AY261361">
    <property type="status" value="NOT_ANNOTATED_CDS"/>
    <property type="molecule type" value="Genomic_DNA"/>
</dbReference>
<dbReference type="Proteomes" id="UP000000860">
    <property type="component" value="Segment"/>
</dbReference>
<dbReference type="GO" id="GO:0016020">
    <property type="term" value="C:membrane"/>
    <property type="evidence" value="ECO:0007669"/>
    <property type="project" value="UniProtKB-KW"/>
</dbReference>
<dbReference type="GO" id="GO:0055036">
    <property type="term" value="C:virion membrane"/>
    <property type="evidence" value="ECO:0007669"/>
    <property type="project" value="UniProtKB-SubCell"/>
</dbReference>
<protein>
    <recommendedName>
        <fullName evidence="4">Inner membrane protein H108R</fullName>
        <shortName>pH108R</shortName>
    </recommendedName>
</protein>
<organismHost>
    <name type="scientific">Ornithodoros</name>
    <name type="common">relapsing fever ticks</name>
    <dbReference type="NCBI Taxonomy" id="6937"/>
</organismHost>
<organismHost>
    <name type="scientific">Phacochoerus aethiopicus</name>
    <name type="common">Warthog</name>
    <dbReference type="NCBI Taxonomy" id="85517"/>
</organismHost>
<organismHost>
    <name type="scientific">Phacochoerus africanus</name>
    <name type="common">Warthog</name>
    <dbReference type="NCBI Taxonomy" id="41426"/>
</organismHost>
<organismHost>
    <name type="scientific">Potamochoerus larvatus</name>
    <name type="common">Bushpig</name>
    <dbReference type="NCBI Taxonomy" id="273792"/>
</organismHost>
<organismHost>
    <name type="scientific">Sus scrofa</name>
    <name type="common">Pig</name>
    <dbReference type="NCBI Taxonomy" id="9823"/>
</organismHost>
<name>VF108_ASFM2</name>
<evidence type="ECO:0000250" key="1">
    <source>
        <dbReference type="UniProtKB" id="Q65188"/>
    </source>
</evidence>
<evidence type="ECO:0000255" key="2"/>
<evidence type="ECO:0000269" key="3">
    <source>
    </source>
</evidence>
<evidence type="ECO:0000305" key="4"/>
<comment type="subcellular location">
    <subcellularLocation>
        <location evidence="1">Virion membrane</location>
        <topology evidence="4">Single-pass membrane protein</topology>
    </subcellularLocation>
    <text evidence="1 3">Detected mainly on membrane-like structures within viral factories (PubMed:9603333). Probably part of the inner envelope (By similarity).</text>
</comment>
<comment type="induction">
    <text evidence="4">Expressed in the late phase of the viral replicative cycle.</text>
</comment>
<comment type="similarity">
    <text evidence="4">Belongs to the asfivirus H108R family.</text>
</comment>
<proteinExistence type="evidence at protein level"/>
<keyword id="KW-0325">Glycoprotein</keyword>
<keyword id="KW-0426">Late protein</keyword>
<keyword id="KW-0472">Membrane</keyword>
<keyword id="KW-0812">Transmembrane</keyword>
<keyword id="KW-1133">Transmembrane helix</keyword>
<keyword id="KW-0946">Virion</keyword>